<comment type="subcellular location">
    <subcellularLocation>
        <location evidence="2">Cell membrane</location>
        <topology evidence="2">Multi-pass membrane protein</topology>
    </subcellularLocation>
</comment>
<accession>P64932</accession>
<accession>A0A1R3Y036</accession>
<accession>Q10684</accession>
<accession>X2BJN0</accession>
<keyword id="KW-1003">Cell membrane</keyword>
<keyword id="KW-0472">Membrane</keyword>
<keyword id="KW-1185">Reference proteome</keyword>
<keyword id="KW-0812">Transmembrane</keyword>
<keyword id="KW-1133">Transmembrane helix</keyword>
<proteinExistence type="predicted"/>
<reference key="1">
    <citation type="journal article" date="2003" name="Proc. Natl. Acad. Sci. U.S.A.">
        <title>The complete genome sequence of Mycobacterium bovis.</title>
        <authorList>
            <person name="Garnier T."/>
            <person name="Eiglmeier K."/>
            <person name="Camus J.-C."/>
            <person name="Medina N."/>
            <person name="Mansoor H."/>
            <person name="Pryor M."/>
            <person name="Duthoy S."/>
            <person name="Grondin S."/>
            <person name="Lacroix C."/>
            <person name="Monsempe C."/>
            <person name="Simon S."/>
            <person name="Harris B."/>
            <person name="Atkin R."/>
            <person name="Doggett J."/>
            <person name="Mayes R."/>
            <person name="Keating L."/>
            <person name="Wheeler P.R."/>
            <person name="Parkhill J."/>
            <person name="Barrell B.G."/>
            <person name="Cole S.T."/>
            <person name="Gordon S.V."/>
            <person name="Hewinson R.G."/>
        </authorList>
    </citation>
    <scope>NUCLEOTIDE SEQUENCE [LARGE SCALE GENOMIC DNA]</scope>
    <source>
        <strain>ATCC BAA-935 / AF2122/97</strain>
    </source>
</reference>
<reference key="2">
    <citation type="journal article" date="2017" name="Genome Announc.">
        <title>Updated reference genome sequence and annotation of Mycobacterium bovis AF2122/97.</title>
        <authorList>
            <person name="Malone K.M."/>
            <person name="Farrell D."/>
            <person name="Stuber T.P."/>
            <person name="Schubert O.T."/>
            <person name="Aebersold R."/>
            <person name="Robbe-Austerman S."/>
            <person name="Gordon S.V."/>
        </authorList>
    </citation>
    <scope>NUCLEOTIDE SEQUENCE [LARGE SCALE GENOMIC DNA]</scope>
    <scope>GENOME REANNOTATION</scope>
    <source>
        <strain>ATCC BAA-935 / AF2122/97</strain>
    </source>
</reference>
<feature type="chain" id="PRO_0000103948" description="Uncharacterized protein Mb2101c">
    <location>
        <begin position="1"/>
        <end position="83"/>
    </location>
</feature>
<feature type="transmembrane region" description="Helical" evidence="1">
    <location>
        <begin position="23"/>
        <end position="43"/>
    </location>
</feature>
<feature type="transmembrane region" description="Helical" evidence="1">
    <location>
        <begin position="49"/>
        <end position="69"/>
    </location>
</feature>
<sequence length="83" mass="9077">MVVCLIGGVAGSLWPRPAGRLRGGCYFAFMGVAWVLLAISAIANAVKGSLWWDIWSLGLLVLIPAVVYGKMRRSRRISSDQDR</sequence>
<organism>
    <name type="scientific">Mycobacterium bovis (strain ATCC BAA-935 / AF2122/97)</name>
    <dbReference type="NCBI Taxonomy" id="233413"/>
    <lineage>
        <taxon>Bacteria</taxon>
        <taxon>Bacillati</taxon>
        <taxon>Actinomycetota</taxon>
        <taxon>Actinomycetes</taxon>
        <taxon>Mycobacteriales</taxon>
        <taxon>Mycobacteriaceae</taxon>
        <taxon>Mycobacterium</taxon>
        <taxon>Mycobacterium tuberculosis complex</taxon>
    </lineage>
</organism>
<dbReference type="EMBL" id="LT708304">
    <property type="protein sequence ID" value="SIU00708.1"/>
    <property type="molecule type" value="Genomic_DNA"/>
</dbReference>
<dbReference type="RefSeq" id="NP_855751.1">
    <property type="nucleotide sequence ID" value="NC_002945.3"/>
</dbReference>
<dbReference type="KEGG" id="mbo:BQ2027_MB2101C"/>
<dbReference type="PATRIC" id="fig|233413.5.peg.2310"/>
<dbReference type="Proteomes" id="UP000001419">
    <property type="component" value="Chromosome"/>
</dbReference>
<dbReference type="GO" id="GO:0005886">
    <property type="term" value="C:plasma membrane"/>
    <property type="evidence" value="ECO:0007669"/>
    <property type="project" value="UniProtKB-SubCell"/>
</dbReference>
<evidence type="ECO:0000255" key="1"/>
<evidence type="ECO:0000305" key="2"/>
<name>Y2101_MYCBO</name>
<gene>
    <name type="ordered locus">BQ2027_MB2101C</name>
</gene>
<protein>
    <recommendedName>
        <fullName>Uncharacterized protein Mb2101c</fullName>
    </recommendedName>
</protein>